<dbReference type="EC" id="3.6.5.2" evidence="2"/>
<dbReference type="EMBL" id="DQ917628">
    <property type="protein sequence ID" value="ABI97173.1"/>
    <property type="molecule type" value="mRNA"/>
</dbReference>
<dbReference type="RefSeq" id="NP_001116645.1">
    <property type="nucleotide sequence ID" value="NM_001123173.1"/>
</dbReference>
<dbReference type="SMR" id="Q06AU7"/>
<dbReference type="FunCoup" id="Q06AU7">
    <property type="interactions" value="1778"/>
</dbReference>
<dbReference type="PeptideAtlas" id="Q06AU7"/>
<dbReference type="GeneID" id="100144502"/>
<dbReference type="KEGG" id="ssc:100144502"/>
<dbReference type="CTD" id="81876"/>
<dbReference type="InParanoid" id="Q06AU7"/>
<dbReference type="OrthoDB" id="9989112at2759"/>
<dbReference type="Proteomes" id="UP000008227">
    <property type="component" value="Unplaced"/>
</dbReference>
<dbReference type="Proteomes" id="UP000314985">
    <property type="component" value="Unplaced"/>
</dbReference>
<dbReference type="Proteomes" id="UP000694570">
    <property type="component" value="Unplaced"/>
</dbReference>
<dbReference type="Proteomes" id="UP000694571">
    <property type="component" value="Unplaced"/>
</dbReference>
<dbReference type="Proteomes" id="UP000694720">
    <property type="component" value="Unplaced"/>
</dbReference>
<dbReference type="Proteomes" id="UP000694722">
    <property type="component" value="Unplaced"/>
</dbReference>
<dbReference type="Proteomes" id="UP000694723">
    <property type="component" value="Unplaced"/>
</dbReference>
<dbReference type="Proteomes" id="UP000694724">
    <property type="component" value="Unplaced"/>
</dbReference>
<dbReference type="Proteomes" id="UP000694725">
    <property type="component" value="Unplaced"/>
</dbReference>
<dbReference type="Proteomes" id="UP000694726">
    <property type="component" value="Unplaced"/>
</dbReference>
<dbReference type="Proteomes" id="UP000694727">
    <property type="component" value="Unplaced"/>
</dbReference>
<dbReference type="Proteomes" id="UP000694728">
    <property type="component" value="Unplaced"/>
</dbReference>
<dbReference type="GO" id="GO:0048471">
    <property type="term" value="C:perinuclear region of cytoplasm"/>
    <property type="evidence" value="ECO:0007669"/>
    <property type="project" value="UniProtKB-SubCell"/>
</dbReference>
<dbReference type="GO" id="GO:0034045">
    <property type="term" value="C:phagophore assembly site membrane"/>
    <property type="evidence" value="ECO:0007669"/>
    <property type="project" value="UniProtKB-SubCell"/>
</dbReference>
<dbReference type="GO" id="GO:0003925">
    <property type="term" value="F:G protein activity"/>
    <property type="evidence" value="ECO:0007669"/>
    <property type="project" value="UniProtKB-EC"/>
</dbReference>
<dbReference type="GO" id="GO:0005525">
    <property type="term" value="F:GTP binding"/>
    <property type="evidence" value="ECO:0000250"/>
    <property type="project" value="UniProtKB"/>
</dbReference>
<dbReference type="GO" id="GO:0003924">
    <property type="term" value="F:GTPase activity"/>
    <property type="evidence" value="ECO:0000318"/>
    <property type="project" value="GO_Central"/>
</dbReference>
<dbReference type="GO" id="GO:0006914">
    <property type="term" value="P:autophagy"/>
    <property type="evidence" value="ECO:0007669"/>
    <property type="project" value="UniProtKB-KW"/>
</dbReference>
<dbReference type="GO" id="GO:0007030">
    <property type="term" value="P:Golgi organization"/>
    <property type="evidence" value="ECO:0000250"/>
    <property type="project" value="UniProtKB"/>
</dbReference>
<dbReference type="GO" id="GO:0015031">
    <property type="term" value="P:protein transport"/>
    <property type="evidence" value="ECO:0007669"/>
    <property type="project" value="UniProtKB-KW"/>
</dbReference>
<dbReference type="GO" id="GO:0016192">
    <property type="term" value="P:vesicle-mediated transport"/>
    <property type="evidence" value="ECO:0000318"/>
    <property type="project" value="GO_Central"/>
</dbReference>
<dbReference type="CDD" id="cd01869">
    <property type="entry name" value="Rab1_Ypt1"/>
    <property type="match status" value="1"/>
</dbReference>
<dbReference type="FunFam" id="3.40.50.300:FF:000069">
    <property type="entry name" value="Ras GTP-binding protein YPT1"/>
    <property type="match status" value="1"/>
</dbReference>
<dbReference type="Gene3D" id="3.40.50.300">
    <property type="entry name" value="P-loop containing nucleotide triphosphate hydrolases"/>
    <property type="match status" value="1"/>
</dbReference>
<dbReference type="InterPro" id="IPR027417">
    <property type="entry name" value="P-loop_NTPase"/>
</dbReference>
<dbReference type="InterPro" id="IPR050227">
    <property type="entry name" value="Rab"/>
</dbReference>
<dbReference type="InterPro" id="IPR005225">
    <property type="entry name" value="Small_GTP-bd"/>
</dbReference>
<dbReference type="InterPro" id="IPR001806">
    <property type="entry name" value="Small_GTPase"/>
</dbReference>
<dbReference type="NCBIfam" id="TIGR00231">
    <property type="entry name" value="small_GTP"/>
    <property type="match status" value="1"/>
</dbReference>
<dbReference type="PANTHER" id="PTHR47977">
    <property type="entry name" value="RAS-RELATED PROTEIN RAB"/>
    <property type="match status" value="1"/>
</dbReference>
<dbReference type="Pfam" id="PF00071">
    <property type="entry name" value="Ras"/>
    <property type="match status" value="1"/>
</dbReference>
<dbReference type="PRINTS" id="PR00449">
    <property type="entry name" value="RASTRNSFRMNG"/>
</dbReference>
<dbReference type="SMART" id="SM00175">
    <property type="entry name" value="RAB"/>
    <property type="match status" value="1"/>
</dbReference>
<dbReference type="SMART" id="SM00176">
    <property type="entry name" value="RAN"/>
    <property type="match status" value="1"/>
</dbReference>
<dbReference type="SMART" id="SM00173">
    <property type="entry name" value="RAS"/>
    <property type="match status" value="1"/>
</dbReference>
<dbReference type="SMART" id="SM00174">
    <property type="entry name" value="RHO"/>
    <property type="match status" value="1"/>
</dbReference>
<dbReference type="SUPFAM" id="SSF52540">
    <property type="entry name" value="P-loop containing nucleoside triphosphate hydrolases"/>
    <property type="match status" value="1"/>
</dbReference>
<dbReference type="PROSITE" id="PS51419">
    <property type="entry name" value="RAB"/>
    <property type="match status" value="1"/>
</dbReference>
<accession>Q06AU7</accession>
<keyword id="KW-0007">Acetylation</keyword>
<keyword id="KW-0072">Autophagy</keyword>
<keyword id="KW-0963">Cytoplasm</keyword>
<keyword id="KW-0342">GTP-binding</keyword>
<keyword id="KW-0378">Hydrolase</keyword>
<keyword id="KW-0449">Lipoprotein</keyword>
<keyword id="KW-0460">Magnesium</keyword>
<keyword id="KW-0472">Membrane</keyword>
<keyword id="KW-0479">Metal-binding</keyword>
<keyword id="KW-0488">Methylation</keyword>
<keyword id="KW-0547">Nucleotide-binding</keyword>
<keyword id="KW-0597">Phosphoprotein</keyword>
<keyword id="KW-0636">Prenylation</keyword>
<keyword id="KW-0653">Protein transport</keyword>
<keyword id="KW-1185">Reference proteome</keyword>
<keyword id="KW-0813">Transport</keyword>
<gene>
    <name type="primary">RAB1B</name>
</gene>
<sequence>MNPEYDYLFKLLLIGDSGVGKSCLLLRFADDTYTESYISTIGVDFKIRTIELDGKTIKLQIWDTAGQERGRTITSSYYRGAHGIIVVYDVTDQESYANVKQWLQEIDRYASENVNKLLVGNKSDLTTKKVVDNTTAKEFADSLGIPFLETSAKNATNVEQAFMTMAAEIKKRMGPGAASGGERPNLKIDSTPVKQAGGGCC</sequence>
<proteinExistence type="evidence at transcript level"/>
<evidence type="ECO:0000250" key="1">
    <source>
        <dbReference type="UniProtKB" id="P10536"/>
    </source>
</evidence>
<evidence type="ECO:0000250" key="2">
    <source>
        <dbReference type="UniProtKB" id="P62820"/>
    </source>
</evidence>
<evidence type="ECO:0000250" key="3">
    <source>
        <dbReference type="UniProtKB" id="Q9D1G1"/>
    </source>
</evidence>
<evidence type="ECO:0000250" key="4">
    <source>
        <dbReference type="UniProtKB" id="Q9H0U4"/>
    </source>
</evidence>
<evidence type="ECO:0000255" key="5"/>
<evidence type="ECO:0000256" key="6">
    <source>
        <dbReference type="SAM" id="MobiDB-lite"/>
    </source>
</evidence>
<evidence type="ECO:0000305" key="7"/>
<comment type="function">
    <text evidence="1 4">The small GTPases Rab are key regulators of intracellular membrane trafficking, from the formation of transport vesicles to their fusion with membranes. Rabs cycle between an inactive GDP-bound form and an active GTP-bound form that is able to recruit to membranes different set of downstream effectors directly responsible for vesicle formation, movement, tethering and fusion (By similarity). Plays a role in the initial events of the autophagic vacuole development which take place at specialized regions of the endoplasmic reticulum (By similarity). Regulates vesicular transport between the endoplasmic reticulum and successive Golgi compartments. Required to modulate the compacted morphology of the Golgi. Promotes the recruitment of lipid phosphatase MTMR6 to the endoplasmic reticulum-Golgi intermediate compartment (By similarity).</text>
</comment>
<comment type="catalytic activity">
    <reaction evidence="2">
        <text>GTP + H2O = GDP + phosphate + H(+)</text>
        <dbReference type="Rhea" id="RHEA:19669"/>
        <dbReference type="ChEBI" id="CHEBI:15377"/>
        <dbReference type="ChEBI" id="CHEBI:15378"/>
        <dbReference type="ChEBI" id="CHEBI:37565"/>
        <dbReference type="ChEBI" id="CHEBI:43474"/>
        <dbReference type="ChEBI" id="CHEBI:58189"/>
        <dbReference type="EC" id="3.6.5.2"/>
    </reaction>
    <physiologicalReaction direction="left-to-right" evidence="2">
        <dbReference type="Rhea" id="RHEA:19670"/>
    </physiologicalReaction>
</comment>
<comment type="cofactor">
    <cofactor evidence="4">
        <name>Mg(2+)</name>
        <dbReference type="ChEBI" id="CHEBI:18420"/>
    </cofactor>
</comment>
<comment type="activity regulation">
    <text evidence="4">Regulated by guanine nucleotide exchange factors (GEFs) which promote the exchange of bound GDP for free GTP. Regulated by GTPase activating proteins (GAPs) including TBC1D20 which increases the GTP hydrolysis activity. Inhibited by GDP dissociation inhibitors (GDIs).</text>
</comment>
<comment type="subunit">
    <text evidence="3 4">Interacts with MICAL1 and MICAL2. Interacts (in GTP-bound form) with MICALCL, MICAL1 and MILCAL3. Interacts with GDI1; the interaction requires the GDP-bound state. Interacts with CHM/REP1; the interaction requires the GDP-bound form and is necessary for prenylation by GGTase II. Interacts with RabGAP TBC1D20. Interacts (in GDP-bound form) with lipid phosphatase MTMR6 (via GRAM domain); the interaction regulates MTMR6 recruitment to the endoplasmic reticulum-Golgi intermediate compartment (By similarity). Interacts (in GDP-bound form) with lipid phosphatase MTMR7 (By similarity).</text>
</comment>
<comment type="subcellular location">
    <subcellularLocation>
        <location evidence="1">Cytoplasm</location>
    </subcellularLocation>
    <subcellularLocation>
        <location evidence="1">Membrane</location>
        <topology evidence="1">Lipid-anchor</topology>
        <orientation evidence="1">Cytoplasmic side</orientation>
    </subcellularLocation>
    <subcellularLocation>
        <location evidence="4">Preautophagosomal structure membrane</location>
        <topology evidence="1">Lipid-anchor</topology>
        <orientation evidence="1">Cytoplasmic side</orientation>
    </subcellularLocation>
    <subcellularLocation>
        <location evidence="1">Cytoplasm</location>
        <location evidence="1">Perinuclear region</location>
    </subcellularLocation>
    <text evidence="1 4">Targeted by REP1 to membranes of specific subcellular compartments including endoplasmic reticulum, Golgi apparatus, and intermediate vesicles between these two compartments. In the GDP-form, colocalizes with GDI in the cytoplasm (By similarity). Co-localizes with MTMR6 to the endoplasmic reticulum-Golgi intermediate compartment and to the peri-Golgi region (By similarity).</text>
</comment>
<comment type="domain">
    <text evidence="4">Switch 1, switch 2 and the interswitch regions are characteristic of Rab GTPases and mediate the interactions with Rab downstream effectors. The switch regions undergo conformational changes upon nucleotide binding which drives interaction with specific sets of effector proteins, with most effectors only binding to GTP-bound Rab.</text>
</comment>
<comment type="PTM">
    <text evidence="4">Prenylated; by GGTase II, only after interaction of the substrate with Rab escort protein 1 (REP1).</text>
</comment>
<comment type="miscellaneous">
    <text evidence="4">Rab-1B binds GTP and GDP and possesses intrinsic GTPase activity.</text>
</comment>
<comment type="similarity">
    <text evidence="7">Belongs to the small GTPase superfamily. Rab family.</text>
</comment>
<feature type="chain" id="PRO_0000270788" description="Ras-related protein Rab-1B">
    <location>
        <begin position="1"/>
        <end position="201"/>
    </location>
</feature>
<feature type="region of interest" description="Switch 2 region; required for interaction with REP1/CHM" evidence="4">
    <location>
        <begin position="64"/>
        <end position="83"/>
    </location>
</feature>
<feature type="region of interest" description="Disordered" evidence="6">
    <location>
        <begin position="173"/>
        <end position="201"/>
    </location>
</feature>
<feature type="short sequence motif" description="Switch 1" evidence="4">
    <location>
        <begin position="30"/>
        <end position="45"/>
    </location>
</feature>
<feature type="short sequence motif" description="Switch 2" evidence="4">
    <location>
        <begin position="65"/>
        <end position="80"/>
    </location>
</feature>
<feature type="binding site" evidence="4">
    <location>
        <position position="17"/>
    </location>
    <ligand>
        <name>GTP</name>
        <dbReference type="ChEBI" id="CHEBI:37565"/>
    </ligand>
</feature>
<feature type="binding site" evidence="4">
    <location>
        <position position="18"/>
    </location>
    <ligand>
        <name>GTP</name>
        <dbReference type="ChEBI" id="CHEBI:37565"/>
    </ligand>
</feature>
<feature type="binding site" evidence="4">
    <location>
        <position position="19"/>
    </location>
    <ligand>
        <name>GTP</name>
        <dbReference type="ChEBI" id="CHEBI:37565"/>
    </ligand>
</feature>
<feature type="binding site" evidence="4">
    <location>
        <position position="20"/>
    </location>
    <ligand>
        <name>GTP</name>
        <dbReference type="ChEBI" id="CHEBI:37565"/>
    </ligand>
</feature>
<feature type="binding site" evidence="4">
    <location>
        <position position="21"/>
    </location>
    <ligand>
        <name>GTP</name>
        <dbReference type="ChEBI" id="CHEBI:37565"/>
    </ligand>
</feature>
<feature type="binding site" evidence="4">
    <location>
        <position position="22"/>
    </location>
    <ligand>
        <name>GTP</name>
        <dbReference type="ChEBI" id="CHEBI:37565"/>
    </ligand>
</feature>
<feature type="binding site" evidence="4">
    <location>
        <position position="22"/>
    </location>
    <ligand>
        <name>Mg(2+)</name>
        <dbReference type="ChEBI" id="CHEBI:18420"/>
    </ligand>
</feature>
<feature type="binding site" evidence="4">
    <location>
        <position position="23"/>
    </location>
    <ligand>
        <name>GTP</name>
        <dbReference type="ChEBI" id="CHEBI:37565"/>
    </ligand>
</feature>
<feature type="binding site" evidence="4">
    <location>
        <position position="33"/>
    </location>
    <ligand>
        <name>GTP</name>
        <dbReference type="ChEBI" id="CHEBI:37565"/>
    </ligand>
</feature>
<feature type="binding site" evidence="4">
    <location>
        <position position="34"/>
    </location>
    <ligand>
        <name>GTP</name>
        <dbReference type="ChEBI" id="CHEBI:37565"/>
    </ligand>
</feature>
<feature type="binding site" evidence="4">
    <location>
        <position position="35"/>
    </location>
    <ligand>
        <name>GTP</name>
        <dbReference type="ChEBI" id="CHEBI:37565"/>
    </ligand>
</feature>
<feature type="binding site" evidence="4">
    <location>
        <position position="36"/>
    </location>
    <ligand>
        <name>GTP</name>
        <dbReference type="ChEBI" id="CHEBI:37565"/>
    </ligand>
</feature>
<feature type="binding site" evidence="4">
    <location>
        <position position="39"/>
    </location>
    <ligand>
        <name>GTP</name>
        <dbReference type="ChEBI" id="CHEBI:37565"/>
    </ligand>
</feature>
<feature type="binding site" evidence="4">
    <location>
        <position position="40"/>
    </location>
    <ligand>
        <name>GTP</name>
        <dbReference type="ChEBI" id="CHEBI:37565"/>
    </ligand>
</feature>
<feature type="binding site" evidence="4">
    <location>
        <position position="40"/>
    </location>
    <ligand>
        <name>Mg(2+)</name>
        <dbReference type="ChEBI" id="CHEBI:18420"/>
    </ligand>
</feature>
<feature type="binding site" evidence="4">
    <location>
        <position position="63"/>
    </location>
    <ligand>
        <name>Mg(2+)</name>
        <dbReference type="ChEBI" id="CHEBI:18420"/>
    </ligand>
</feature>
<feature type="binding site" evidence="4">
    <location>
        <position position="66"/>
    </location>
    <ligand>
        <name>GTP</name>
        <dbReference type="ChEBI" id="CHEBI:37565"/>
    </ligand>
</feature>
<feature type="binding site" evidence="4">
    <location>
        <position position="121"/>
    </location>
    <ligand>
        <name>GTP</name>
        <dbReference type="ChEBI" id="CHEBI:37565"/>
    </ligand>
</feature>
<feature type="binding site" evidence="4">
    <location>
        <position position="122"/>
    </location>
    <ligand>
        <name>GTP</name>
        <dbReference type="ChEBI" id="CHEBI:37565"/>
    </ligand>
</feature>
<feature type="binding site" evidence="4">
    <location>
        <position position="124"/>
    </location>
    <ligand>
        <name>GTP</name>
        <dbReference type="ChEBI" id="CHEBI:37565"/>
    </ligand>
</feature>
<feature type="binding site" evidence="4">
    <location>
        <position position="151"/>
    </location>
    <ligand>
        <name>GTP</name>
        <dbReference type="ChEBI" id="CHEBI:37565"/>
    </ligand>
</feature>
<feature type="binding site" evidence="4">
    <location>
        <position position="152"/>
    </location>
    <ligand>
        <name>GTP</name>
        <dbReference type="ChEBI" id="CHEBI:37565"/>
    </ligand>
</feature>
<feature type="binding site" evidence="4">
    <location>
        <position position="153"/>
    </location>
    <ligand>
        <name>GTP</name>
        <dbReference type="ChEBI" id="CHEBI:37565"/>
    </ligand>
</feature>
<feature type="modified residue" description="N-acetylmethionine" evidence="4">
    <location>
        <position position="1"/>
    </location>
</feature>
<feature type="modified residue" description="Cysteine methyl ester" evidence="5">
    <location>
        <position position="201"/>
    </location>
</feature>
<feature type="lipid moiety-binding region" description="S-geranylgeranyl cysteine" evidence="4">
    <location>
        <position position="200"/>
    </location>
</feature>
<feature type="lipid moiety-binding region" description="S-geranylgeranyl cysteine" evidence="4">
    <location>
        <position position="201"/>
    </location>
</feature>
<protein>
    <recommendedName>
        <fullName>Ras-related protein Rab-1B</fullName>
        <ecNumber evidence="2">3.6.5.2</ecNumber>
    </recommendedName>
</protein>
<name>RAB1B_PIG</name>
<organism>
    <name type="scientific">Sus scrofa</name>
    <name type="common">Pig</name>
    <dbReference type="NCBI Taxonomy" id="9823"/>
    <lineage>
        <taxon>Eukaryota</taxon>
        <taxon>Metazoa</taxon>
        <taxon>Chordata</taxon>
        <taxon>Craniata</taxon>
        <taxon>Vertebrata</taxon>
        <taxon>Euteleostomi</taxon>
        <taxon>Mammalia</taxon>
        <taxon>Eutheria</taxon>
        <taxon>Laurasiatheria</taxon>
        <taxon>Artiodactyla</taxon>
        <taxon>Suina</taxon>
        <taxon>Suidae</taxon>
        <taxon>Sus</taxon>
    </lineage>
</organism>
<reference key="1">
    <citation type="submission" date="2006-08" db="EMBL/GenBank/DDBJ databases">
        <authorList>
            <person name="Liu G.Y."/>
        </authorList>
    </citation>
    <scope>NUCLEOTIDE SEQUENCE [LARGE SCALE MRNA]</scope>
</reference>